<comment type="function">
    <text evidence="1">Digests double-stranded RNA. Involved in the processing of primary rRNA transcript to yield the immediate precursors to the large and small rRNAs (23S and 16S). Processes some mRNAs, and tRNAs when they are encoded in the rRNA operon. Processes pre-crRNA and tracrRNA of type II CRISPR loci if present in the organism.</text>
</comment>
<comment type="catalytic activity">
    <reaction evidence="1">
        <text>Endonucleolytic cleavage to 5'-phosphomonoester.</text>
        <dbReference type="EC" id="3.1.26.3"/>
    </reaction>
</comment>
<comment type="cofactor">
    <cofactor evidence="1">
        <name>Mg(2+)</name>
        <dbReference type="ChEBI" id="CHEBI:18420"/>
    </cofactor>
</comment>
<comment type="subunit">
    <text evidence="1">Homodimer.</text>
</comment>
<comment type="subcellular location">
    <subcellularLocation>
        <location evidence="1">Cytoplasm</location>
    </subcellularLocation>
</comment>
<comment type="similarity">
    <text evidence="1">Belongs to the ribonuclease III family.</text>
</comment>
<feature type="chain" id="PRO_0000228545" description="Ribonuclease 3">
    <location>
        <begin position="1"/>
        <end position="237"/>
    </location>
</feature>
<feature type="domain" description="RNase III" evidence="1">
    <location>
        <begin position="8"/>
        <end position="134"/>
    </location>
</feature>
<feature type="domain" description="DRBM" evidence="1">
    <location>
        <begin position="161"/>
        <end position="229"/>
    </location>
</feature>
<feature type="active site" evidence="1">
    <location>
        <position position="51"/>
    </location>
</feature>
<feature type="active site" evidence="1">
    <location>
        <position position="123"/>
    </location>
</feature>
<feature type="binding site" evidence="1">
    <location>
        <position position="47"/>
    </location>
    <ligand>
        <name>Mg(2+)</name>
        <dbReference type="ChEBI" id="CHEBI:18420"/>
    </ligand>
</feature>
<feature type="binding site" evidence="1">
    <location>
        <position position="120"/>
    </location>
    <ligand>
        <name>Mg(2+)</name>
        <dbReference type="ChEBI" id="CHEBI:18420"/>
    </ligand>
</feature>
<feature type="binding site" evidence="1">
    <location>
        <position position="123"/>
    </location>
    <ligand>
        <name>Mg(2+)</name>
        <dbReference type="ChEBI" id="CHEBI:18420"/>
    </ligand>
</feature>
<dbReference type="EC" id="3.1.26.3" evidence="1"/>
<dbReference type="EMBL" id="AE016822">
    <property type="protein sequence ID" value="AAT88851.1"/>
    <property type="molecule type" value="Genomic_DNA"/>
</dbReference>
<dbReference type="RefSeq" id="WP_011185848.1">
    <property type="nucleotide sequence ID" value="NC_006087.1"/>
</dbReference>
<dbReference type="SMR" id="Q6AFJ4"/>
<dbReference type="STRING" id="281090.Lxx09780"/>
<dbReference type="KEGG" id="lxx:Lxx09780"/>
<dbReference type="eggNOG" id="COG0571">
    <property type="taxonomic scope" value="Bacteria"/>
</dbReference>
<dbReference type="HOGENOM" id="CLU_000907_1_2_11"/>
<dbReference type="Proteomes" id="UP000001306">
    <property type="component" value="Chromosome"/>
</dbReference>
<dbReference type="GO" id="GO:0005737">
    <property type="term" value="C:cytoplasm"/>
    <property type="evidence" value="ECO:0007669"/>
    <property type="project" value="UniProtKB-SubCell"/>
</dbReference>
<dbReference type="GO" id="GO:0003725">
    <property type="term" value="F:double-stranded RNA binding"/>
    <property type="evidence" value="ECO:0007669"/>
    <property type="project" value="TreeGrafter"/>
</dbReference>
<dbReference type="GO" id="GO:0046872">
    <property type="term" value="F:metal ion binding"/>
    <property type="evidence" value="ECO:0007669"/>
    <property type="project" value="UniProtKB-KW"/>
</dbReference>
<dbReference type="GO" id="GO:0004525">
    <property type="term" value="F:ribonuclease III activity"/>
    <property type="evidence" value="ECO:0007669"/>
    <property type="project" value="UniProtKB-UniRule"/>
</dbReference>
<dbReference type="GO" id="GO:0019843">
    <property type="term" value="F:rRNA binding"/>
    <property type="evidence" value="ECO:0007669"/>
    <property type="project" value="UniProtKB-KW"/>
</dbReference>
<dbReference type="GO" id="GO:0006397">
    <property type="term" value="P:mRNA processing"/>
    <property type="evidence" value="ECO:0007669"/>
    <property type="project" value="UniProtKB-UniRule"/>
</dbReference>
<dbReference type="GO" id="GO:0010468">
    <property type="term" value="P:regulation of gene expression"/>
    <property type="evidence" value="ECO:0007669"/>
    <property type="project" value="TreeGrafter"/>
</dbReference>
<dbReference type="GO" id="GO:0006364">
    <property type="term" value="P:rRNA processing"/>
    <property type="evidence" value="ECO:0007669"/>
    <property type="project" value="UniProtKB-UniRule"/>
</dbReference>
<dbReference type="GO" id="GO:0008033">
    <property type="term" value="P:tRNA processing"/>
    <property type="evidence" value="ECO:0007669"/>
    <property type="project" value="UniProtKB-KW"/>
</dbReference>
<dbReference type="CDD" id="cd10845">
    <property type="entry name" value="DSRM_RNAse_III_family"/>
    <property type="match status" value="1"/>
</dbReference>
<dbReference type="CDD" id="cd00593">
    <property type="entry name" value="RIBOc"/>
    <property type="match status" value="1"/>
</dbReference>
<dbReference type="FunFam" id="1.10.1520.10:FF:000001">
    <property type="entry name" value="Ribonuclease 3"/>
    <property type="match status" value="1"/>
</dbReference>
<dbReference type="FunFam" id="3.30.160.20:FF:000003">
    <property type="entry name" value="Ribonuclease 3"/>
    <property type="match status" value="1"/>
</dbReference>
<dbReference type="Gene3D" id="3.30.160.20">
    <property type="match status" value="1"/>
</dbReference>
<dbReference type="Gene3D" id="1.10.1520.10">
    <property type="entry name" value="Ribonuclease III domain"/>
    <property type="match status" value="1"/>
</dbReference>
<dbReference type="HAMAP" id="MF_00104">
    <property type="entry name" value="RNase_III"/>
    <property type="match status" value="1"/>
</dbReference>
<dbReference type="InterPro" id="IPR014720">
    <property type="entry name" value="dsRBD_dom"/>
</dbReference>
<dbReference type="InterPro" id="IPR011907">
    <property type="entry name" value="RNase_III"/>
</dbReference>
<dbReference type="InterPro" id="IPR000999">
    <property type="entry name" value="RNase_III_dom"/>
</dbReference>
<dbReference type="InterPro" id="IPR036389">
    <property type="entry name" value="RNase_III_sf"/>
</dbReference>
<dbReference type="NCBIfam" id="TIGR02191">
    <property type="entry name" value="RNaseIII"/>
    <property type="match status" value="1"/>
</dbReference>
<dbReference type="PANTHER" id="PTHR11207:SF0">
    <property type="entry name" value="RIBONUCLEASE 3"/>
    <property type="match status" value="1"/>
</dbReference>
<dbReference type="PANTHER" id="PTHR11207">
    <property type="entry name" value="RIBONUCLEASE III"/>
    <property type="match status" value="1"/>
</dbReference>
<dbReference type="Pfam" id="PF00035">
    <property type="entry name" value="dsrm"/>
    <property type="match status" value="1"/>
</dbReference>
<dbReference type="Pfam" id="PF14622">
    <property type="entry name" value="Ribonucleas_3_3"/>
    <property type="match status" value="1"/>
</dbReference>
<dbReference type="SMART" id="SM00358">
    <property type="entry name" value="DSRM"/>
    <property type="match status" value="1"/>
</dbReference>
<dbReference type="SMART" id="SM00535">
    <property type="entry name" value="RIBOc"/>
    <property type="match status" value="1"/>
</dbReference>
<dbReference type="SUPFAM" id="SSF54768">
    <property type="entry name" value="dsRNA-binding domain-like"/>
    <property type="match status" value="1"/>
</dbReference>
<dbReference type="SUPFAM" id="SSF69065">
    <property type="entry name" value="RNase III domain-like"/>
    <property type="match status" value="1"/>
</dbReference>
<dbReference type="PROSITE" id="PS50137">
    <property type="entry name" value="DS_RBD"/>
    <property type="match status" value="1"/>
</dbReference>
<dbReference type="PROSITE" id="PS00517">
    <property type="entry name" value="RNASE_3_1"/>
    <property type="match status" value="1"/>
</dbReference>
<dbReference type="PROSITE" id="PS50142">
    <property type="entry name" value="RNASE_3_2"/>
    <property type="match status" value="1"/>
</dbReference>
<organism>
    <name type="scientific">Leifsonia xyli subsp. xyli (strain CTCB07)</name>
    <dbReference type="NCBI Taxonomy" id="281090"/>
    <lineage>
        <taxon>Bacteria</taxon>
        <taxon>Bacillati</taxon>
        <taxon>Actinomycetota</taxon>
        <taxon>Actinomycetes</taxon>
        <taxon>Micrococcales</taxon>
        <taxon>Microbacteriaceae</taxon>
        <taxon>Leifsonia</taxon>
    </lineage>
</organism>
<protein>
    <recommendedName>
        <fullName evidence="1">Ribonuclease 3</fullName>
        <ecNumber evidence="1">3.1.26.3</ecNumber>
    </recommendedName>
    <alternativeName>
        <fullName evidence="1">Ribonuclease III</fullName>
        <shortName evidence="1">RNase III</shortName>
    </alternativeName>
</protein>
<proteinExistence type="inferred from homology"/>
<reference key="1">
    <citation type="journal article" date="2004" name="Mol. Plant Microbe Interact.">
        <title>The genome sequence of the Gram-positive sugarcane pathogen Leifsonia xyli subsp. xyli.</title>
        <authorList>
            <person name="Monteiro-Vitorello C.B."/>
            <person name="Camargo L.E.A."/>
            <person name="Van Sluys M.A."/>
            <person name="Kitajima J.P."/>
            <person name="Truffi D."/>
            <person name="do Amaral A.M."/>
            <person name="Harakava R."/>
            <person name="de Oliveira J.C.F."/>
            <person name="Wood D."/>
            <person name="de Oliveira M.C."/>
            <person name="Miyaki C.Y."/>
            <person name="Takita M.A."/>
            <person name="da Silva A.C.R."/>
            <person name="Furlan L.R."/>
            <person name="Carraro D.M."/>
            <person name="Camarotte G."/>
            <person name="Almeida N.F. Jr."/>
            <person name="Carrer H."/>
            <person name="Coutinho L.L."/>
            <person name="El-Dorry H.A."/>
            <person name="Ferro M.I.T."/>
            <person name="Gagliardi P.R."/>
            <person name="Giglioti E."/>
            <person name="Goldman M.H.S."/>
            <person name="Goldman G.H."/>
            <person name="Kimura E.T."/>
            <person name="Ferro E.S."/>
            <person name="Kuramae E.E."/>
            <person name="Lemos E.G.M."/>
            <person name="Lemos M.V.F."/>
            <person name="Mauro S.M.Z."/>
            <person name="Machado M.A."/>
            <person name="Marino C.L."/>
            <person name="Menck C.F."/>
            <person name="Nunes L.R."/>
            <person name="Oliveira R.C."/>
            <person name="Pereira G.G."/>
            <person name="Siqueira W."/>
            <person name="de Souza A.A."/>
            <person name="Tsai S.M."/>
            <person name="Zanca A.S."/>
            <person name="Simpson A.J.G."/>
            <person name="Brumbley S.M."/>
            <person name="Setubal J.C."/>
        </authorList>
    </citation>
    <scope>NUCLEOTIDE SEQUENCE [LARGE SCALE GENOMIC DNA]</scope>
    <source>
        <strain>CTCB07</strain>
    </source>
</reference>
<accession>Q6AFJ4</accession>
<gene>
    <name evidence="1" type="primary">rnc</name>
    <name type="ordered locus">Lxx09780</name>
</gene>
<evidence type="ECO:0000255" key="1">
    <source>
        <dbReference type="HAMAP-Rule" id="MF_00104"/>
    </source>
</evidence>
<sequence length="237" mass="24821">MVGENTDRSALLEKLGVDIDPELLELALTHRSYAYENGGIPNNERLEFLGDSILGQAVTVKLFRENPGLDEGELAKRRASLVSSVALAEVARGIGLGEYLLLGRGENQSGGREKASILADTVEAVIGAVYLDAGGDEATALVLRLIGPLLADPDRFGAAMDPKTSLQEAAAHHGAGQPVYTVINTGPDHSKTFHATVDVGGLVTASGEGTSKKQAEMAAALSAWTALTNHRARTPRG</sequence>
<keyword id="KW-0963">Cytoplasm</keyword>
<keyword id="KW-0255">Endonuclease</keyword>
<keyword id="KW-0378">Hydrolase</keyword>
<keyword id="KW-0460">Magnesium</keyword>
<keyword id="KW-0479">Metal-binding</keyword>
<keyword id="KW-0507">mRNA processing</keyword>
<keyword id="KW-0540">Nuclease</keyword>
<keyword id="KW-1185">Reference proteome</keyword>
<keyword id="KW-0694">RNA-binding</keyword>
<keyword id="KW-0698">rRNA processing</keyword>
<keyword id="KW-0699">rRNA-binding</keyword>
<keyword id="KW-0819">tRNA processing</keyword>
<name>RNC_LEIXX</name>